<dbReference type="EMBL" id="BT021054">
    <property type="protein sequence ID" value="AAX09071.1"/>
    <property type="molecule type" value="mRNA"/>
</dbReference>
<dbReference type="EMBL" id="BC103177">
    <property type="protein sequence ID" value="AAI03178.1"/>
    <property type="molecule type" value="mRNA"/>
</dbReference>
<dbReference type="RefSeq" id="NP_001015628.1">
    <property type="nucleotide sequence ID" value="NM_001015628.1"/>
</dbReference>
<dbReference type="SMR" id="Q5E966"/>
<dbReference type="FunCoup" id="Q5E966">
    <property type="interactions" value="2933"/>
</dbReference>
<dbReference type="STRING" id="9913.ENSBTAP00000019134"/>
<dbReference type="PaxDb" id="9913-ENSBTAP00000019134"/>
<dbReference type="PeptideAtlas" id="Q5E966"/>
<dbReference type="Ensembl" id="ENSBTAT00000019134.5">
    <property type="protein sequence ID" value="ENSBTAP00000019134.3"/>
    <property type="gene ID" value="ENSBTAG00000014388.5"/>
</dbReference>
<dbReference type="GeneID" id="521747"/>
<dbReference type="KEGG" id="bta:521747"/>
<dbReference type="CTD" id="8668"/>
<dbReference type="VEuPathDB" id="HostDB:ENSBTAG00000014388"/>
<dbReference type="VGNC" id="VGNC:28399">
    <property type="gene designation" value="EIF3I"/>
</dbReference>
<dbReference type="eggNOG" id="KOG0643">
    <property type="taxonomic scope" value="Eukaryota"/>
</dbReference>
<dbReference type="GeneTree" id="ENSGT00940000161371"/>
<dbReference type="HOGENOM" id="CLU_043845_0_0_1"/>
<dbReference type="InParanoid" id="Q5E966"/>
<dbReference type="OMA" id="VWFSHNG"/>
<dbReference type="OrthoDB" id="24966at2759"/>
<dbReference type="TreeFam" id="TF101515"/>
<dbReference type="Reactome" id="R-BTA-156827">
    <property type="pathway name" value="L13a-mediated translational silencing of Ceruloplasmin expression"/>
</dbReference>
<dbReference type="Reactome" id="R-BTA-72649">
    <property type="pathway name" value="Translation initiation complex formation"/>
</dbReference>
<dbReference type="Reactome" id="R-BTA-72689">
    <property type="pathway name" value="Formation of a pool of free 40S subunits"/>
</dbReference>
<dbReference type="Reactome" id="R-BTA-72695">
    <property type="pathway name" value="Formation of the ternary complex, and subsequently, the 43S complex"/>
</dbReference>
<dbReference type="Reactome" id="R-BTA-72702">
    <property type="pathway name" value="Ribosomal scanning and start codon recognition"/>
</dbReference>
<dbReference type="Proteomes" id="UP000009136">
    <property type="component" value="Chromosome 2"/>
</dbReference>
<dbReference type="Bgee" id="ENSBTAG00000014388">
    <property type="expression patterns" value="Expressed in theca cell and 108 other cell types or tissues"/>
</dbReference>
<dbReference type="GO" id="GO:0016282">
    <property type="term" value="C:eukaryotic 43S preinitiation complex"/>
    <property type="evidence" value="ECO:0007669"/>
    <property type="project" value="UniProtKB-UniRule"/>
</dbReference>
<dbReference type="GO" id="GO:0033290">
    <property type="term" value="C:eukaryotic 48S preinitiation complex"/>
    <property type="evidence" value="ECO:0007669"/>
    <property type="project" value="UniProtKB-UniRule"/>
</dbReference>
<dbReference type="GO" id="GO:0005852">
    <property type="term" value="C:eukaryotic translation initiation factor 3 complex"/>
    <property type="evidence" value="ECO:0000250"/>
    <property type="project" value="UniProtKB"/>
</dbReference>
<dbReference type="GO" id="GO:0071541">
    <property type="term" value="C:eukaryotic translation initiation factor 3 complex, eIF3m"/>
    <property type="evidence" value="ECO:0000318"/>
    <property type="project" value="GO_Central"/>
</dbReference>
<dbReference type="GO" id="GO:0003723">
    <property type="term" value="F:RNA binding"/>
    <property type="evidence" value="ECO:0000318"/>
    <property type="project" value="GO_Central"/>
</dbReference>
<dbReference type="GO" id="GO:0003743">
    <property type="term" value="F:translation initiation factor activity"/>
    <property type="evidence" value="ECO:0000250"/>
    <property type="project" value="UniProtKB"/>
</dbReference>
<dbReference type="GO" id="GO:0002183">
    <property type="term" value="P:cytoplasmic translational initiation"/>
    <property type="evidence" value="ECO:0000318"/>
    <property type="project" value="GO_Central"/>
</dbReference>
<dbReference type="GO" id="GO:0001732">
    <property type="term" value="P:formation of cytoplasmic translation initiation complex"/>
    <property type="evidence" value="ECO:0007669"/>
    <property type="project" value="UniProtKB-UniRule"/>
</dbReference>
<dbReference type="GO" id="GO:0006413">
    <property type="term" value="P:translational initiation"/>
    <property type="evidence" value="ECO:0000250"/>
    <property type="project" value="UniProtKB"/>
</dbReference>
<dbReference type="FunFam" id="2.130.10.10:FF:000127">
    <property type="entry name" value="Eukaryotic translation initiation factor 3 subunit I"/>
    <property type="match status" value="1"/>
</dbReference>
<dbReference type="Gene3D" id="2.130.10.10">
    <property type="entry name" value="YVTN repeat-like/Quinoprotein amine dehydrogenase"/>
    <property type="match status" value="1"/>
</dbReference>
<dbReference type="HAMAP" id="MF_03008">
    <property type="entry name" value="eIF3i"/>
    <property type="match status" value="1"/>
</dbReference>
<dbReference type="InterPro" id="IPR027525">
    <property type="entry name" value="eIF3i"/>
</dbReference>
<dbReference type="InterPro" id="IPR015943">
    <property type="entry name" value="WD40/YVTN_repeat-like_dom_sf"/>
</dbReference>
<dbReference type="InterPro" id="IPR019775">
    <property type="entry name" value="WD40_repeat_CS"/>
</dbReference>
<dbReference type="InterPro" id="IPR036322">
    <property type="entry name" value="WD40_repeat_dom_sf"/>
</dbReference>
<dbReference type="InterPro" id="IPR001680">
    <property type="entry name" value="WD40_rpt"/>
</dbReference>
<dbReference type="PANTHER" id="PTHR19877">
    <property type="entry name" value="EUKARYOTIC TRANSLATION INITIATION FACTOR 3 SUBUNIT I"/>
    <property type="match status" value="1"/>
</dbReference>
<dbReference type="PANTHER" id="PTHR19877:SF1">
    <property type="entry name" value="EUKARYOTIC TRANSLATION INITIATION FACTOR 3 SUBUNIT I"/>
    <property type="match status" value="1"/>
</dbReference>
<dbReference type="Pfam" id="PF24805">
    <property type="entry name" value="EIF3I"/>
    <property type="match status" value="1"/>
</dbReference>
<dbReference type="SMART" id="SM00320">
    <property type="entry name" value="WD40"/>
    <property type="match status" value="5"/>
</dbReference>
<dbReference type="SUPFAM" id="SSF50978">
    <property type="entry name" value="WD40 repeat-like"/>
    <property type="match status" value="1"/>
</dbReference>
<dbReference type="PROSITE" id="PS00678">
    <property type="entry name" value="WD_REPEATS_1"/>
    <property type="match status" value="1"/>
</dbReference>
<dbReference type="PROSITE" id="PS50082">
    <property type="entry name" value="WD_REPEATS_2"/>
    <property type="match status" value="4"/>
</dbReference>
<dbReference type="PROSITE" id="PS50294">
    <property type="entry name" value="WD_REPEATS_REGION"/>
    <property type="match status" value="2"/>
</dbReference>
<reference key="1">
    <citation type="journal article" date="2005" name="BMC Genomics">
        <title>Characterization of 954 bovine full-CDS cDNA sequences.</title>
        <authorList>
            <person name="Harhay G.P."/>
            <person name="Sonstegard T.S."/>
            <person name="Keele J.W."/>
            <person name="Heaton M.P."/>
            <person name="Clawson M.L."/>
            <person name="Snelling W.M."/>
            <person name="Wiedmann R.T."/>
            <person name="Van Tassell C.P."/>
            <person name="Smith T.P.L."/>
        </authorList>
    </citation>
    <scope>NUCLEOTIDE SEQUENCE [LARGE SCALE MRNA]</scope>
</reference>
<reference key="2">
    <citation type="submission" date="2005-08" db="EMBL/GenBank/DDBJ databases">
        <authorList>
            <consortium name="NIH - Mammalian Gene Collection (MGC) project"/>
        </authorList>
    </citation>
    <scope>NUCLEOTIDE SEQUENCE [LARGE SCALE MRNA]</scope>
    <source>
        <strain>Hereford</strain>
        <tissue>Hypothalamus</tissue>
    </source>
</reference>
<proteinExistence type="evidence at transcript level"/>
<sequence>MKPILLQGHERSITQIKYNREGDLLFTVAKDPIVNVWYSVNGERLGTYMGHTGAVWCVDADWDTKHVLTGSADNSCRLWDCETGKQLALLKTNSAVRTCGFDFGGNIIMFSTDKQMGYQCFVSFFDLRDPSQIDSNEPYMRIPCNDSKITSAVWGPLGECIIAGHEGGELNQYSAKSGEVLVNVKEHSRQINDIQLSRDMTMFVTASKDNTAKLFDSTTLEHQKTFRTERPVNSAALSPNYDHVVLGGGQEAMDVTTTSTRIGKFEARFFHLAFEEEFGRVKGHFGPINSVAFHPDGKSYSSGGEDGYVRIHYFDPQYFEFEFEA</sequence>
<protein>
    <recommendedName>
        <fullName evidence="2">Eukaryotic translation initiation factor 3 subunit I</fullName>
        <shortName evidence="2">eIF3i</shortName>
    </recommendedName>
    <alternativeName>
        <fullName evidence="2">Eukaryotic translation initiation factor 3 subunit 2</fullName>
    </alternativeName>
    <alternativeName>
        <fullName evidence="2">eIF-3-beta</fullName>
    </alternativeName>
    <alternativeName>
        <fullName evidence="2">eIF3 p36</fullName>
    </alternativeName>
</protein>
<feature type="chain" id="PRO_0000051035" description="Eukaryotic translation initiation factor 3 subunit I">
    <location>
        <begin position="1"/>
        <end position="325"/>
    </location>
</feature>
<feature type="repeat" description="WD 1">
    <location>
        <begin position="8"/>
        <end position="47"/>
    </location>
</feature>
<feature type="repeat" description="WD 2">
    <location>
        <begin position="50"/>
        <end position="91"/>
    </location>
</feature>
<feature type="repeat" description="WD 3">
    <location>
        <begin position="144"/>
        <end position="183"/>
    </location>
</feature>
<feature type="repeat" description="WD 4">
    <location>
        <begin position="186"/>
        <end position="225"/>
    </location>
</feature>
<feature type="repeat" description="WD 5">
    <location>
        <begin position="283"/>
        <end position="324"/>
    </location>
</feature>
<feature type="modified residue" description="Phosphothreonine" evidence="1">
    <location>
        <position position="219"/>
    </location>
</feature>
<feature type="modified residue" description="N6-acetyllysine" evidence="1">
    <location>
        <position position="264"/>
    </location>
</feature>
<feature type="modified residue" description="Phosphotyrosine" evidence="1">
    <location>
        <position position="308"/>
    </location>
</feature>
<feature type="cross-link" description="Glycyl lysine isopeptide (Lys-Gly) (interchain with G-Cter in ubiquitin)" evidence="1">
    <location>
        <position position="282"/>
    </location>
</feature>
<comment type="function">
    <text evidence="2">Component of the eukaryotic translation initiation factor 3 (eIF-3) complex, which is required for several steps in the initiation of protein synthesis. The eIF-3 complex associates with the 40S ribosome and facilitates the recruitment of eIF-1, eIF-1A, eIF-2:GTP:methionyl-tRNAi and eIF-5 to form the 43S pre-initiation complex (43S PIC). The eIF-3 complex stimulates mRNA recruitment to the 43S PIC and scanning of the mRNA for AUG recognition. The eIF-3 complex is also required for disassembly and recycling of post-termination ribosomal complexes and subsequently prevents premature joining of the 40S and 60S ribosomal subunits prior to initiation. The eIF-3 complex specifically targets and initiates translation of a subset of mRNAs involved in cell proliferation, including cell cycling, differentiation and apoptosis, and uses different modes of RNA stem-loop binding to exert either translational activation or repression.</text>
</comment>
<comment type="subunit">
    <text evidence="2">Component of the eukaryotic translation initiation factor 3 (eIF-3) complex, which is composed of 13 subunits: EIF3A, EIF3B, EIF3C, EIF3D, EIF3E, EIF3F, EIF3G, EIF3H, EIF3I, EIF3J, EIF3K, EIF3L and EIF3M. The eIF-3 complex appears to include 3 stable modules: module A is composed of EIF3A, EIF3B, EIF3G and EIF3I; module B is composed of EIF3F, EIF3H, and EIF3M; and module C is composed of EIF3C, EIF3D, EIF3E, EIF3K and EIF3L. EIF3C of module C binds EIF3B of module A and EIF3H of module B, thereby linking the three modules. EIF3J is a labile subunit that binds to the eIF-3 complex via EIF3B. The eIF-3 complex interacts with RPS6KB1 under conditions of nutrient depletion. Mitogenic stimulation leads to binding and activation of a complex composed of MTOR and RPTOR, leading to phosphorylation and release of RPS6KB1 and binding of EIF4B to eIF-3.</text>
</comment>
<comment type="subcellular location">
    <subcellularLocation>
        <location evidence="2">Cytoplasm</location>
    </subcellularLocation>
</comment>
<comment type="PTM">
    <text evidence="2">Phosphorylated by TGF-beta type II receptor.</text>
</comment>
<comment type="similarity">
    <text evidence="2">Belongs to the eIF-3 subunit I family.</text>
</comment>
<keyword id="KW-0007">Acetylation</keyword>
<keyword id="KW-0963">Cytoplasm</keyword>
<keyword id="KW-0396">Initiation factor</keyword>
<keyword id="KW-1017">Isopeptide bond</keyword>
<keyword id="KW-0597">Phosphoprotein</keyword>
<keyword id="KW-0648">Protein biosynthesis</keyword>
<keyword id="KW-1185">Reference proteome</keyword>
<keyword id="KW-0677">Repeat</keyword>
<keyword id="KW-0832">Ubl conjugation</keyword>
<keyword id="KW-0853">WD repeat</keyword>
<accession>Q5E966</accession>
<accession>Q3SZ38</accession>
<evidence type="ECO:0000250" key="1">
    <source>
        <dbReference type="UniProtKB" id="Q13347"/>
    </source>
</evidence>
<evidence type="ECO:0000255" key="2">
    <source>
        <dbReference type="HAMAP-Rule" id="MF_03008"/>
    </source>
</evidence>
<organism>
    <name type="scientific">Bos taurus</name>
    <name type="common">Bovine</name>
    <dbReference type="NCBI Taxonomy" id="9913"/>
    <lineage>
        <taxon>Eukaryota</taxon>
        <taxon>Metazoa</taxon>
        <taxon>Chordata</taxon>
        <taxon>Craniata</taxon>
        <taxon>Vertebrata</taxon>
        <taxon>Euteleostomi</taxon>
        <taxon>Mammalia</taxon>
        <taxon>Eutheria</taxon>
        <taxon>Laurasiatheria</taxon>
        <taxon>Artiodactyla</taxon>
        <taxon>Ruminantia</taxon>
        <taxon>Pecora</taxon>
        <taxon>Bovidae</taxon>
        <taxon>Bovinae</taxon>
        <taxon>Bos</taxon>
    </lineage>
</organism>
<gene>
    <name evidence="2" type="primary">EIF3I</name>
    <name evidence="2" type="synonym">EIF3S2</name>
</gene>
<name>EIF3I_BOVIN</name>